<reference key="1">
    <citation type="journal article" date="2002" name="Science">
        <title>50 million years of genomic stasis in endosymbiotic bacteria.</title>
        <authorList>
            <person name="Tamas I."/>
            <person name="Klasson L."/>
            <person name="Canbaeck B."/>
            <person name="Naeslund A.K."/>
            <person name="Eriksson A.-S."/>
            <person name="Wernegreen J.J."/>
            <person name="Sandstroem J.P."/>
            <person name="Moran N.A."/>
            <person name="Andersson S.G.E."/>
        </authorList>
    </citation>
    <scope>NUCLEOTIDE SEQUENCE [LARGE SCALE GENOMIC DNA]</scope>
    <source>
        <strain>Sg</strain>
    </source>
</reference>
<keyword id="KW-0975">Bacterial flagellum</keyword>
<keyword id="KW-0732">Signal</keyword>
<proteinExistence type="inferred from homology"/>
<feature type="signal peptide" evidence="1">
    <location>
        <begin position="1"/>
        <end position="24"/>
    </location>
</feature>
<feature type="chain" id="PRO_0000009496" description="Flagellar P-ring protein">
    <location>
        <begin position="25"/>
        <end position="369"/>
    </location>
</feature>
<dbReference type="EMBL" id="AE013218">
    <property type="protein sequence ID" value="AAM67886.1"/>
    <property type="status" value="ALT_INIT"/>
    <property type="molecule type" value="Genomic_DNA"/>
</dbReference>
<dbReference type="RefSeq" id="WP_148140854.1">
    <property type="nucleotide sequence ID" value="NC_004061.1"/>
</dbReference>
<dbReference type="SMR" id="Q8K9K2"/>
<dbReference type="STRING" id="198804.BUsg_332"/>
<dbReference type="GeneID" id="93003803"/>
<dbReference type="KEGG" id="bas:BUsg_332"/>
<dbReference type="eggNOG" id="COG1706">
    <property type="taxonomic scope" value="Bacteria"/>
</dbReference>
<dbReference type="HOGENOM" id="CLU_045235_1_0_6"/>
<dbReference type="Proteomes" id="UP000000416">
    <property type="component" value="Chromosome"/>
</dbReference>
<dbReference type="GO" id="GO:0009428">
    <property type="term" value="C:bacterial-type flagellum basal body, distal rod, P ring"/>
    <property type="evidence" value="ECO:0007669"/>
    <property type="project" value="InterPro"/>
</dbReference>
<dbReference type="GO" id="GO:0030288">
    <property type="term" value="C:outer membrane-bounded periplasmic space"/>
    <property type="evidence" value="ECO:0007669"/>
    <property type="project" value="InterPro"/>
</dbReference>
<dbReference type="GO" id="GO:0005198">
    <property type="term" value="F:structural molecule activity"/>
    <property type="evidence" value="ECO:0007669"/>
    <property type="project" value="InterPro"/>
</dbReference>
<dbReference type="GO" id="GO:0071973">
    <property type="term" value="P:bacterial-type flagellum-dependent cell motility"/>
    <property type="evidence" value="ECO:0007669"/>
    <property type="project" value="InterPro"/>
</dbReference>
<dbReference type="HAMAP" id="MF_00416">
    <property type="entry name" value="FlgI"/>
    <property type="match status" value="1"/>
</dbReference>
<dbReference type="InterPro" id="IPR001782">
    <property type="entry name" value="Flag_FlgI"/>
</dbReference>
<dbReference type="NCBIfam" id="NF003676">
    <property type="entry name" value="PRK05303.1"/>
    <property type="match status" value="1"/>
</dbReference>
<dbReference type="PANTHER" id="PTHR30381">
    <property type="entry name" value="FLAGELLAR P-RING PERIPLASMIC PROTEIN FLGI"/>
    <property type="match status" value="1"/>
</dbReference>
<dbReference type="PANTHER" id="PTHR30381:SF0">
    <property type="entry name" value="FLAGELLAR P-RING PROTEIN"/>
    <property type="match status" value="1"/>
</dbReference>
<dbReference type="Pfam" id="PF02119">
    <property type="entry name" value="FlgI"/>
    <property type="match status" value="1"/>
</dbReference>
<dbReference type="PRINTS" id="PR01010">
    <property type="entry name" value="FLGPRINGFLGI"/>
</dbReference>
<organism>
    <name type="scientific">Buchnera aphidicola subsp. Schizaphis graminum (strain Sg)</name>
    <dbReference type="NCBI Taxonomy" id="198804"/>
    <lineage>
        <taxon>Bacteria</taxon>
        <taxon>Pseudomonadati</taxon>
        <taxon>Pseudomonadota</taxon>
        <taxon>Gammaproteobacteria</taxon>
        <taxon>Enterobacterales</taxon>
        <taxon>Erwiniaceae</taxon>
        <taxon>Buchnera</taxon>
    </lineage>
</organism>
<sequence length="369" mass="40615">MSKTISLLKFIICILISLCSFTYAEKIRDLTSIEGIRDNQLIGYGLIVGLDGTGDQSTQTPFTNQSLHNMLSQLGVTIPPDTNMHLKNVAAVIVTANLPPFSHTGEAIDVVVSSMGDAKSLKGGTLLMTPLRGADNQIYAIAQGNILVSEKNNLKKNNSIFSNQVNSGRINHGATIEREINTDFGKKKIINLQLNKEDFGIAQKISDMINVQYPDTATALNSKTVQLNTYANNTIQVHMLSNIQNIDISMPSQEAKVIINPRTGSIVINQEVKLGTCIVSHGDLSILIEKKEEEKINSFLFETLRKNQKESFLKNIINRNYINNNSVKNTSLNNIVRVLNSLGTKPNELISILQLMKNAGCLHAKLEIV</sequence>
<evidence type="ECO:0000255" key="1">
    <source>
        <dbReference type="HAMAP-Rule" id="MF_00416"/>
    </source>
</evidence>
<evidence type="ECO:0000305" key="2"/>
<protein>
    <recommendedName>
        <fullName evidence="1">Flagellar P-ring protein</fullName>
    </recommendedName>
    <alternativeName>
        <fullName evidence="1">Basal body P-ring protein</fullName>
    </alternativeName>
</protein>
<name>FLGI_BUCAP</name>
<comment type="function">
    <text evidence="1">Assembles around the rod to form the L-ring and probably protects the motor/basal body from shearing forces during rotation.</text>
</comment>
<comment type="subunit">
    <text evidence="1">The basal body constitutes a major portion of the flagellar organelle and consists of four rings (L,P,S, and M) mounted on a central rod.</text>
</comment>
<comment type="subcellular location">
    <subcellularLocation>
        <location evidence="1">Bacterial flagellum basal body</location>
    </subcellularLocation>
</comment>
<comment type="similarity">
    <text evidence="1">Belongs to the FlgI family.</text>
</comment>
<comment type="sequence caution" evidence="2">
    <conflict type="erroneous initiation">
        <sequence resource="EMBL-CDS" id="AAM67886"/>
    </conflict>
</comment>
<gene>
    <name evidence="1" type="primary">flgI</name>
    <name type="ordered locus">BUsg_332</name>
</gene>
<accession>Q8K9K2</accession>